<comment type="function">
    <text evidence="1">Required for growth and/or survival at acidic conditions.</text>
</comment>
<comment type="subcellular location">
    <subcellularLocation>
        <location evidence="1">Periplasm</location>
    </subcellularLocation>
</comment>
<comment type="PTM">
    <text evidence="1">Proteolytic processing gives rise to the active protein.</text>
</comment>
<comment type="similarity">
    <text evidence="1">Belongs to the Asr family.</text>
</comment>
<feature type="signal peptide" evidence="1">
    <location>
        <begin position="1"/>
        <end position="21"/>
    </location>
</feature>
<feature type="propeptide" id="PRO_1000061074" evidence="1">
    <location>
        <begin position="22"/>
        <end position="90"/>
    </location>
</feature>
<feature type="chain" id="PRO_1000061075" description="Acid shock protein">
    <location>
        <begin position="91"/>
        <end position="132"/>
    </location>
</feature>
<feature type="region of interest" description="Disordered" evidence="2">
    <location>
        <begin position="20"/>
        <end position="132"/>
    </location>
</feature>
<feature type="compositionally biased region" description="Low complexity" evidence="2">
    <location>
        <begin position="20"/>
        <end position="45"/>
    </location>
</feature>
<feature type="compositionally biased region" description="Basic residues" evidence="2">
    <location>
        <begin position="62"/>
        <end position="71"/>
    </location>
</feature>
<feature type="compositionally biased region" description="Low complexity" evidence="2">
    <location>
        <begin position="76"/>
        <end position="90"/>
    </location>
</feature>
<feature type="compositionally biased region" description="Low complexity" evidence="2">
    <location>
        <begin position="100"/>
        <end position="109"/>
    </location>
</feature>
<feature type="compositionally biased region" description="Basic residues" evidence="2">
    <location>
        <begin position="110"/>
        <end position="119"/>
    </location>
</feature>
<protein>
    <recommendedName>
        <fullName evidence="1">Acid shock protein</fullName>
    </recommendedName>
</protein>
<evidence type="ECO:0000255" key="1">
    <source>
        <dbReference type="HAMAP-Rule" id="MF_00546"/>
    </source>
</evidence>
<evidence type="ECO:0000256" key="2">
    <source>
        <dbReference type="SAM" id="MobiDB-lite"/>
    </source>
</evidence>
<name>ASR_ENT38</name>
<dbReference type="EMBL" id="CP000653">
    <property type="protein sequence ID" value="ABP60591.1"/>
    <property type="molecule type" value="Genomic_DNA"/>
</dbReference>
<dbReference type="RefSeq" id="WP_012017306.1">
    <property type="nucleotide sequence ID" value="NC_009436.1"/>
</dbReference>
<dbReference type="KEGG" id="ent:Ent638_1915"/>
<dbReference type="eggNOG" id="ENOG5032U9T">
    <property type="taxonomic scope" value="Bacteria"/>
</dbReference>
<dbReference type="HOGENOM" id="CLU_102486_0_4_6"/>
<dbReference type="Proteomes" id="UP000000230">
    <property type="component" value="Chromosome"/>
</dbReference>
<dbReference type="GO" id="GO:0042597">
    <property type="term" value="C:periplasmic space"/>
    <property type="evidence" value="ECO:0007669"/>
    <property type="project" value="UniProtKB-SubCell"/>
</dbReference>
<dbReference type="HAMAP" id="MF_00546">
    <property type="entry name" value="Asr"/>
    <property type="match status" value="1"/>
</dbReference>
<dbReference type="InterPro" id="IPR023497">
    <property type="entry name" value="Acid_shock"/>
</dbReference>
<dbReference type="NCBIfam" id="NF033636">
    <property type="entry name" value="acid_shock_Asr"/>
    <property type="match status" value="1"/>
</dbReference>
<dbReference type="Pfam" id="PF06392">
    <property type="entry name" value="Asr"/>
    <property type="match status" value="1"/>
</dbReference>
<reference key="1">
    <citation type="journal article" date="2010" name="PLoS Genet.">
        <title>Genome sequence of the plant growth promoting endophytic bacterium Enterobacter sp. 638.</title>
        <authorList>
            <person name="Taghavi S."/>
            <person name="van der Lelie D."/>
            <person name="Hoffman A."/>
            <person name="Zhang Y.B."/>
            <person name="Walla M.D."/>
            <person name="Vangronsveld J."/>
            <person name="Newman L."/>
            <person name="Monchy S."/>
        </authorList>
    </citation>
    <scope>NUCLEOTIDE SEQUENCE [LARGE SCALE GENOMIC DNA]</scope>
    <source>
        <strain>638</strain>
    </source>
</reference>
<proteinExistence type="inferred from homology"/>
<gene>
    <name evidence="1" type="primary">asr</name>
    <name type="ordered locus">Ent638_1915</name>
</gene>
<sequence length="132" mass="13517">MKKVLALVVAAAMGLSSAAFAAETTTSSAAPATATATTTKAAPAKTVHHKKHKKAVEQKAQAAKKHHKKAVKKQEAAPATTTAPVEQKAQAAKKHHKAAAKPAVAQKAQAAKKHHKKAVKHEAAKPAAQPAA</sequence>
<organism>
    <name type="scientific">Enterobacter sp. (strain 638)</name>
    <dbReference type="NCBI Taxonomy" id="399742"/>
    <lineage>
        <taxon>Bacteria</taxon>
        <taxon>Pseudomonadati</taxon>
        <taxon>Pseudomonadota</taxon>
        <taxon>Gammaproteobacteria</taxon>
        <taxon>Enterobacterales</taxon>
        <taxon>Enterobacteriaceae</taxon>
        <taxon>Enterobacter</taxon>
    </lineage>
</organism>
<accession>A4WA61</accession>
<keyword id="KW-0574">Periplasm</keyword>
<keyword id="KW-0732">Signal</keyword>